<name>ERG3_MYCTO</name>
<evidence type="ECO:0000255" key="1"/>
<evidence type="ECO:0000305" key="2"/>
<sequence>MRDPVLFAIPCFLLLLILEWTAARKLESIETAATGQPRPASGAYLTRDSVASISMGLVSIATTAGWKSLALLGYAAIYAYLAPWQLSAHRWYTWVIAIVGVDLLYYSYHRIAHRVRLIWATHQAHHSSEYFNFATALRQKWNNSGEILMWVPLPLMGLPPWMVFCSWSLNLIYQFWVHTERIDRLPRWFEFVFNTPSHHRVHHGMDPVYLDKNYGGILIIWDRLFGSFQPELFRPHYGLTKRVDTFNIWKLQTREYVAIVRDWRSATRLRDRLGYVFGPPGWEPRTIDKSNAAASLVTSR</sequence>
<accession>P9WNZ8</accession>
<accession>L0TAG8</accession>
<accession>P68435</accession>
<accession>Q50619</accession>
<gene>
    <name type="primary">erg3</name>
    <name type="ordered locus">MT1862</name>
</gene>
<comment type="subcellular location">
    <subcellularLocation>
        <location evidence="2">Cell membrane</location>
        <topology evidence="2">Multi-pass membrane protein</topology>
    </subcellularLocation>
</comment>
<comment type="similarity">
    <text evidence="2">Belongs to the sterol desaturase family.</text>
</comment>
<comment type="sequence caution" evidence="2">
    <conflict type="erroneous initiation">
        <sequence resource="EMBL-CDS" id="AAK46135"/>
    </conflict>
</comment>
<proteinExistence type="inferred from homology"/>
<protein>
    <recommendedName>
        <fullName>C-5 sterol desaturase</fullName>
        <ecNumber>1.3.-.-</ecNumber>
    </recommendedName>
    <alternativeName>
        <fullName>Sterol-C5-desaturase</fullName>
    </alternativeName>
</protein>
<reference key="1">
    <citation type="journal article" date="2002" name="J. Bacteriol.">
        <title>Whole-genome comparison of Mycobacterium tuberculosis clinical and laboratory strains.</title>
        <authorList>
            <person name="Fleischmann R.D."/>
            <person name="Alland D."/>
            <person name="Eisen J.A."/>
            <person name="Carpenter L."/>
            <person name="White O."/>
            <person name="Peterson J.D."/>
            <person name="DeBoy R.T."/>
            <person name="Dodson R.J."/>
            <person name="Gwinn M.L."/>
            <person name="Haft D.H."/>
            <person name="Hickey E.K."/>
            <person name="Kolonay J.F."/>
            <person name="Nelson W.C."/>
            <person name="Umayam L.A."/>
            <person name="Ermolaeva M.D."/>
            <person name="Salzberg S.L."/>
            <person name="Delcher A."/>
            <person name="Utterback T.R."/>
            <person name="Weidman J.F."/>
            <person name="Khouri H.M."/>
            <person name="Gill J."/>
            <person name="Mikula A."/>
            <person name="Bishai W."/>
            <person name="Jacobs W.R. Jr."/>
            <person name="Venter J.C."/>
            <person name="Fraser C.M."/>
        </authorList>
    </citation>
    <scope>NUCLEOTIDE SEQUENCE [LARGE SCALE GENOMIC DNA]</scope>
    <source>
        <strain>CDC 1551 / Oshkosh</strain>
    </source>
</reference>
<feature type="chain" id="PRO_0000427039" description="C-5 sterol desaturase">
    <location>
        <begin position="1"/>
        <end position="300"/>
    </location>
</feature>
<feature type="transmembrane region" description="Helical" evidence="1">
    <location>
        <begin position="3"/>
        <end position="23"/>
    </location>
</feature>
<feature type="transmembrane region" description="Helical" evidence="1">
    <location>
        <begin position="68"/>
        <end position="88"/>
    </location>
</feature>
<feature type="transmembrane region" description="Helical" evidence="1">
    <location>
        <begin position="91"/>
        <end position="111"/>
    </location>
</feature>
<feature type="transmembrane region" description="Helical" evidence="1">
    <location>
        <begin position="147"/>
        <end position="167"/>
    </location>
</feature>
<feature type="domain" description="Fatty acid hydroxylase" evidence="1">
    <location>
        <begin position="94"/>
        <end position="227"/>
    </location>
</feature>
<dbReference type="EC" id="1.3.-.-"/>
<dbReference type="EMBL" id="AE000516">
    <property type="protein sequence ID" value="AAK46135.1"/>
    <property type="status" value="ALT_INIT"/>
    <property type="molecule type" value="Genomic_DNA"/>
</dbReference>
<dbReference type="PIR" id="G70719">
    <property type="entry name" value="G70719"/>
</dbReference>
<dbReference type="KEGG" id="mtc:MT1862"/>
<dbReference type="PATRIC" id="fig|83331.31.peg.2005"/>
<dbReference type="HOGENOM" id="CLU_033631_1_0_11"/>
<dbReference type="Proteomes" id="UP000001020">
    <property type="component" value="Chromosome"/>
</dbReference>
<dbReference type="GO" id="GO:0005886">
    <property type="term" value="C:plasma membrane"/>
    <property type="evidence" value="ECO:0007669"/>
    <property type="project" value="UniProtKB-SubCell"/>
</dbReference>
<dbReference type="GO" id="GO:0050479">
    <property type="term" value="F:glyceryl-ether monooxygenase activity"/>
    <property type="evidence" value="ECO:0007669"/>
    <property type="project" value="TreeGrafter"/>
</dbReference>
<dbReference type="GO" id="GO:0005506">
    <property type="term" value="F:iron ion binding"/>
    <property type="evidence" value="ECO:0007669"/>
    <property type="project" value="InterPro"/>
</dbReference>
<dbReference type="GO" id="GO:0006643">
    <property type="term" value="P:membrane lipid metabolic process"/>
    <property type="evidence" value="ECO:0007669"/>
    <property type="project" value="TreeGrafter"/>
</dbReference>
<dbReference type="GO" id="GO:0016126">
    <property type="term" value="P:sterol biosynthetic process"/>
    <property type="evidence" value="ECO:0007669"/>
    <property type="project" value="UniProtKB-KW"/>
</dbReference>
<dbReference type="InterPro" id="IPR006694">
    <property type="entry name" value="Fatty_acid_hydroxylase"/>
</dbReference>
<dbReference type="InterPro" id="IPR051689">
    <property type="entry name" value="Sterol_desaturase/TMEM195"/>
</dbReference>
<dbReference type="PANTHER" id="PTHR21624:SF1">
    <property type="entry name" value="ALKYLGLYCEROL MONOOXYGENASE"/>
    <property type="match status" value="1"/>
</dbReference>
<dbReference type="PANTHER" id="PTHR21624">
    <property type="entry name" value="STEROL DESATURASE-RELATED PROTEIN"/>
    <property type="match status" value="1"/>
</dbReference>
<dbReference type="Pfam" id="PF04116">
    <property type="entry name" value="FA_hydroxylase"/>
    <property type="match status" value="1"/>
</dbReference>
<keyword id="KW-1003">Cell membrane</keyword>
<keyword id="KW-0444">Lipid biosynthesis</keyword>
<keyword id="KW-0443">Lipid metabolism</keyword>
<keyword id="KW-0472">Membrane</keyword>
<keyword id="KW-0560">Oxidoreductase</keyword>
<keyword id="KW-1185">Reference proteome</keyword>
<keyword id="KW-0752">Steroid biosynthesis</keyword>
<keyword id="KW-0753">Steroid metabolism</keyword>
<keyword id="KW-0756">Sterol biosynthesis</keyword>
<keyword id="KW-1207">Sterol metabolism</keyword>
<keyword id="KW-0812">Transmembrane</keyword>
<keyword id="KW-1133">Transmembrane helix</keyword>
<organism>
    <name type="scientific">Mycobacterium tuberculosis (strain CDC 1551 / Oshkosh)</name>
    <dbReference type="NCBI Taxonomy" id="83331"/>
    <lineage>
        <taxon>Bacteria</taxon>
        <taxon>Bacillati</taxon>
        <taxon>Actinomycetota</taxon>
        <taxon>Actinomycetes</taxon>
        <taxon>Mycobacteriales</taxon>
        <taxon>Mycobacteriaceae</taxon>
        <taxon>Mycobacterium</taxon>
        <taxon>Mycobacterium tuberculosis complex</taxon>
    </lineage>
</organism>